<comment type="catalytic activity">
    <reaction evidence="1 2">
        <text>urea + 2 H2O + H(+) = hydrogencarbonate + 2 NH4(+)</text>
        <dbReference type="Rhea" id="RHEA:20557"/>
        <dbReference type="ChEBI" id="CHEBI:15377"/>
        <dbReference type="ChEBI" id="CHEBI:15378"/>
        <dbReference type="ChEBI" id="CHEBI:16199"/>
        <dbReference type="ChEBI" id="CHEBI:17544"/>
        <dbReference type="ChEBI" id="CHEBI:28938"/>
        <dbReference type="EC" id="3.5.1.5"/>
    </reaction>
</comment>
<comment type="biophysicochemical properties">
    <kinetics>
        <KM evidence="2">9.5 mM for urea (at 37 degrees Celsius and pH 7.0)</KM>
        <Vmax evidence="2">1.979 mmol/min/mg enzyme</Vmax>
    </kinetics>
    <phDependence>
        <text evidence="2">Optimum pH is 7.0 in phosphate buffer.</text>
    </phDependence>
    <temperatureDependence>
        <text evidence="2">Optimum temperature is 55 degrees Celsius.</text>
    </temperatureDependence>
</comment>
<comment type="pathway">
    <text evidence="1">Nitrogen metabolism; urea degradation; CO(2) and NH(3) from urea (urease route): step 1/1.</text>
</comment>
<comment type="subunit">
    <text evidence="1">Heterotrimer of UreA (gamma), UreB (beta) and UreC (alpha) subunits. Three heterotrimers associate to form the active enzyme.</text>
</comment>
<comment type="subcellular location">
    <subcellularLocation>
        <location evidence="1">Cytoplasm</location>
    </subcellularLocation>
</comment>
<comment type="similarity">
    <text evidence="1">Belongs to the urease beta subunit family.</text>
</comment>
<dbReference type="EC" id="3.5.1.5" evidence="1"/>
<dbReference type="EMBL" id="AP008934">
    <property type="protein sequence ID" value="BAE17409.1"/>
    <property type="molecule type" value="Genomic_DNA"/>
</dbReference>
<dbReference type="RefSeq" id="WP_011302250.1">
    <property type="nucleotide sequence ID" value="NZ_MTGA01000037.1"/>
</dbReference>
<dbReference type="SMR" id="Q4A0J4"/>
<dbReference type="GeneID" id="3616070"/>
<dbReference type="KEGG" id="ssp:SSP0264"/>
<dbReference type="PATRIC" id="fig|342451.11.peg.267"/>
<dbReference type="eggNOG" id="COG0832">
    <property type="taxonomic scope" value="Bacteria"/>
</dbReference>
<dbReference type="HOGENOM" id="CLU_129707_2_2_9"/>
<dbReference type="OrthoDB" id="9797217at2"/>
<dbReference type="UniPathway" id="UPA00258">
    <property type="reaction ID" value="UER00370"/>
</dbReference>
<dbReference type="Proteomes" id="UP000006371">
    <property type="component" value="Chromosome"/>
</dbReference>
<dbReference type="GO" id="GO:0035550">
    <property type="term" value="C:urease complex"/>
    <property type="evidence" value="ECO:0007669"/>
    <property type="project" value="InterPro"/>
</dbReference>
<dbReference type="GO" id="GO:0009039">
    <property type="term" value="F:urease activity"/>
    <property type="evidence" value="ECO:0007669"/>
    <property type="project" value="UniProtKB-UniRule"/>
</dbReference>
<dbReference type="GO" id="GO:0043419">
    <property type="term" value="P:urea catabolic process"/>
    <property type="evidence" value="ECO:0007669"/>
    <property type="project" value="UniProtKB-UniRule"/>
</dbReference>
<dbReference type="CDD" id="cd00407">
    <property type="entry name" value="Urease_beta"/>
    <property type="match status" value="1"/>
</dbReference>
<dbReference type="FunFam" id="2.10.150.10:FF:000001">
    <property type="entry name" value="Urease subunit beta"/>
    <property type="match status" value="1"/>
</dbReference>
<dbReference type="Gene3D" id="2.10.150.10">
    <property type="entry name" value="Urease, beta subunit"/>
    <property type="match status" value="1"/>
</dbReference>
<dbReference type="HAMAP" id="MF_01954">
    <property type="entry name" value="Urease_beta"/>
    <property type="match status" value="1"/>
</dbReference>
<dbReference type="InterPro" id="IPR002019">
    <property type="entry name" value="Urease_beta-like"/>
</dbReference>
<dbReference type="InterPro" id="IPR036461">
    <property type="entry name" value="Urease_betasu_sf"/>
</dbReference>
<dbReference type="InterPro" id="IPR050069">
    <property type="entry name" value="Urease_subunit"/>
</dbReference>
<dbReference type="NCBIfam" id="NF009682">
    <property type="entry name" value="PRK13203.1"/>
    <property type="match status" value="1"/>
</dbReference>
<dbReference type="NCBIfam" id="TIGR00192">
    <property type="entry name" value="urease_beta"/>
    <property type="match status" value="1"/>
</dbReference>
<dbReference type="PANTHER" id="PTHR33569">
    <property type="entry name" value="UREASE"/>
    <property type="match status" value="1"/>
</dbReference>
<dbReference type="PANTHER" id="PTHR33569:SF1">
    <property type="entry name" value="UREASE"/>
    <property type="match status" value="1"/>
</dbReference>
<dbReference type="Pfam" id="PF00699">
    <property type="entry name" value="Urease_beta"/>
    <property type="match status" value="1"/>
</dbReference>
<dbReference type="SUPFAM" id="SSF51278">
    <property type="entry name" value="Urease, beta-subunit"/>
    <property type="match status" value="1"/>
</dbReference>
<gene>
    <name evidence="1" type="primary">ureB</name>
    <name type="ordered locus">SSP0264</name>
</gene>
<protein>
    <recommendedName>
        <fullName evidence="1">Urease subunit beta</fullName>
        <ecNumber evidence="1">3.5.1.5</ecNumber>
    </recommendedName>
    <alternativeName>
        <fullName evidence="1">Urea amidohydrolase subunit beta</fullName>
    </alternativeName>
</protein>
<evidence type="ECO:0000255" key="1">
    <source>
        <dbReference type="HAMAP-Rule" id="MF_01954"/>
    </source>
</evidence>
<evidence type="ECO:0000269" key="2">
    <source>
    </source>
</evidence>
<feature type="chain" id="PRO_0000234274" description="Urease subunit beta">
    <location>
        <begin position="1"/>
        <end position="134"/>
    </location>
</feature>
<proteinExistence type="evidence at protein level"/>
<organism>
    <name type="scientific">Staphylococcus saprophyticus subsp. saprophyticus (strain ATCC 15305 / DSM 20229 / NCIMB 8711 / NCTC 7292 / S-41)</name>
    <dbReference type="NCBI Taxonomy" id="342451"/>
    <lineage>
        <taxon>Bacteria</taxon>
        <taxon>Bacillati</taxon>
        <taxon>Bacillota</taxon>
        <taxon>Bacilli</taxon>
        <taxon>Bacillales</taxon>
        <taxon>Staphylococcaceae</taxon>
        <taxon>Staphylococcus</taxon>
    </lineage>
</organism>
<reference key="1">
    <citation type="journal article" date="2005" name="Proc. Natl. Acad. Sci. U.S.A.">
        <title>Whole genome sequence of Staphylococcus saprophyticus reveals the pathogenesis of uncomplicated urinary tract infection.</title>
        <authorList>
            <person name="Kuroda M."/>
            <person name="Yamashita A."/>
            <person name="Hirakawa H."/>
            <person name="Kumano M."/>
            <person name="Morikawa K."/>
            <person name="Higashide M."/>
            <person name="Maruyama A."/>
            <person name="Inose Y."/>
            <person name="Matoba K."/>
            <person name="Toh H."/>
            <person name="Kuhara S."/>
            <person name="Hattori M."/>
            <person name="Ohta T."/>
        </authorList>
    </citation>
    <scope>NUCLEOTIDE SEQUENCE [LARGE SCALE GENOMIC DNA]</scope>
    <source>
        <strain>ATCC 15305 / DSM 20229 / NCIMB 8711 / NCTC 7292 / S-41</strain>
    </source>
</reference>
<reference key="2">
    <citation type="journal article" date="1994" name="Arch. Microbiol.">
        <title>Urease from Staphylococcus saprophyticus: purification, characterization and comparison to Staphylococcus xylosus urease.</title>
        <authorList>
            <person name="Schaefer U.K."/>
            <person name="Kaltwasser H."/>
        </authorList>
    </citation>
    <scope>PROTEIN SEQUENCE OF 1-6</scope>
    <scope>CATALYTIC ACTIVITY</scope>
    <scope>BIOPHYSICOCHEMICAL PROPERTIES</scope>
</reference>
<accession>Q4A0J4</accession>
<keyword id="KW-0963">Cytoplasm</keyword>
<keyword id="KW-0903">Direct protein sequencing</keyword>
<keyword id="KW-0378">Hydrolase</keyword>
<keyword id="KW-1185">Reference proteome</keyword>
<sequence>MKPGEIIVKRTEIEVNQGHNATILNVKNTGDRPIQVGSHYHFFEANPALQFDHEKAYGKRLDIPAGAAVRFEPGDEKEVQLVEYSGKRKIYGFHGDVNGSIDESRVYKLEDDSTATEVIAEQDKTSENANKGRG</sequence>
<name>URE2_STAS1</name>